<gene>
    <name type="ordered locus">SGO_2040</name>
</gene>
<protein>
    <recommendedName>
        <fullName evidence="1">UPF0473 protein SGO_2040</fullName>
    </recommendedName>
</protein>
<reference key="1">
    <citation type="journal article" date="2007" name="J. Bacteriol.">
        <title>Genome-wide transcriptional changes in Streptococcus gordonii in response to competence signaling peptide.</title>
        <authorList>
            <person name="Vickerman M.M."/>
            <person name="Iobst S."/>
            <person name="Jesionowski A.M."/>
            <person name="Gill S.R."/>
        </authorList>
    </citation>
    <scope>NUCLEOTIDE SEQUENCE [LARGE SCALE GENOMIC DNA]</scope>
    <source>
        <strain>Challis / ATCC 35105 / BCRC 15272 / CH1 / DL1 / V288</strain>
    </source>
</reference>
<proteinExistence type="inferred from homology"/>
<keyword id="KW-1185">Reference proteome</keyword>
<evidence type="ECO:0000255" key="1">
    <source>
        <dbReference type="HAMAP-Rule" id="MF_01448"/>
    </source>
</evidence>
<dbReference type="EMBL" id="CP000725">
    <property type="protein sequence ID" value="ABV09196.1"/>
    <property type="molecule type" value="Genomic_DNA"/>
</dbReference>
<dbReference type="RefSeq" id="WP_008809966.1">
    <property type="nucleotide sequence ID" value="NC_009785.1"/>
</dbReference>
<dbReference type="STRING" id="467705.SGO_2040"/>
<dbReference type="KEGG" id="sgo:SGO_2040"/>
<dbReference type="eggNOG" id="COG3906">
    <property type="taxonomic scope" value="Bacteria"/>
</dbReference>
<dbReference type="HOGENOM" id="CLU_146610_2_1_9"/>
<dbReference type="Proteomes" id="UP000001131">
    <property type="component" value="Chromosome"/>
</dbReference>
<dbReference type="HAMAP" id="MF_01448">
    <property type="entry name" value="UPF0473"/>
    <property type="match status" value="1"/>
</dbReference>
<dbReference type="InterPro" id="IPR009711">
    <property type="entry name" value="UPF0473"/>
</dbReference>
<dbReference type="NCBIfam" id="NF010215">
    <property type="entry name" value="PRK13678.1-2"/>
    <property type="match status" value="1"/>
</dbReference>
<dbReference type="NCBIfam" id="NF010217">
    <property type="entry name" value="PRK13678.1-4"/>
    <property type="match status" value="1"/>
</dbReference>
<dbReference type="PANTHER" id="PTHR40066">
    <property type="entry name" value="UPF0473 PROTEIN CBO2561/CLC_2432"/>
    <property type="match status" value="1"/>
</dbReference>
<dbReference type="PANTHER" id="PTHR40066:SF1">
    <property type="entry name" value="UPF0473 PROTEIN CBO2561_CLC_2432"/>
    <property type="match status" value="1"/>
</dbReference>
<dbReference type="Pfam" id="PF06949">
    <property type="entry name" value="DUF1292"/>
    <property type="match status" value="1"/>
</dbReference>
<sequence>MAHDHNHDHEHEERELITLVDEQGNETLFEILLTIDGMEEFGKNYVLLVPANAEEDENGEVEIQAYSFTENEDGTEGDLQPIPEDAEEEWNMIEEVFNSFMEE</sequence>
<feature type="chain" id="PRO_1000087507" description="UPF0473 protein SGO_2040">
    <location>
        <begin position="1"/>
        <end position="103"/>
    </location>
</feature>
<comment type="similarity">
    <text evidence="1">Belongs to the UPF0473 family.</text>
</comment>
<name>Y2040_STRGC</name>
<organism>
    <name type="scientific">Streptococcus gordonii (strain Challis / ATCC 35105 / BCRC 15272 / CH1 / DL1 / V288)</name>
    <dbReference type="NCBI Taxonomy" id="467705"/>
    <lineage>
        <taxon>Bacteria</taxon>
        <taxon>Bacillati</taxon>
        <taxon>Bacillota</taxon>
        <taxon>Bacilli</taxon>
        <taxon>Lactobacillales</taxon>
        <taxon>Streptococcaceae</taxon>
        <taxon>Streptococcus</taxon>
    </lineage>
</organism>
<accession>A8AZS8</accession>